<feature type="chain" id="PRO_0000240542" description="Probable chorismate pyruvate-lyase">
    <location>
        <begin position="1"/>
        <end position="197"/>
    </location>
</feature>
<feature type="region of interest" description="Disordered" evidence="2">
    <location>
        <begin position="1"/>
        <end position="25"/>
    </location>
</feature>
<feature type="compositionally biased region" description="Basic and acidic residues" evidence="2">
    <location>
        <begin position="1"/>
        <end position="14"/>
    </location>
</feature>
<feature type="binding site" evidence="1">
    <location>
        <position position="73"/>
    </location>
    <ligand>
        <name>substrate</name>
    </ligand>
</feature>
<feature type="binding site" evidence="1">
    <location>
        <position position="111"/>
    </location>
    <ligand>
        <name>substrate</name>
    </ligand>
</feature>
<feature type="binding site" evidence="1">
    <location>
        <position position="173"/>
    </location>
    <ligand>
        <name>substrate</name>
    </ligand>
</feature>
<organism>
    <name type="scientific">Burkholderia thailandensis (strain ATCC 700388 / DSM 13276 / CCUG 48851 / CIP 106301 / E264)</name>
    <dbReference type="NCBI Taxonomy" id="271848"/>
    <lineage>
        <taxon>Bacteria</taxon>
        <taxon>Pseudomonadati</taxon>
        <taxon>Pseudomonadota</taxon>
        <taxon>Betaproteobacteria</taxon>
        <taxon>Burkholderiales</taxon>
        <taxon>Burkholderiaceae</taxon>
        <taxon>Burkholderia</taxon>
        <taxon>pseudomallei group</taxon>
    </lineage>
</organism>
<protein>
    <recommendedName>
        <fullName evidence="1">Probable chorismate pyruvate-lyase</fullName>
        <shortName evidence="1">CL</shortName>
        <shortName evidence="1">CPL</shortName>
        <ecNumber evidence="1">4.1.3.40</ecNumber>
    </recommendedName>
</protein>
<accession>Q2SZY9</accession>
<gene>
    <name evidence="1" type="primary">ubiC</name>
    <name type="ordered locus">BTH_I0956</name>
</gene>
<evidence type="ECO:0000255" key="1">
    <source>
        <dbReference type="HAMAP-Rule" id="MF_01632"/>
    </source>
</evidence>
<evidence type="ECO:0000256" key="2">
    <source>
        <dbReference type="SAM" id="MobiDB-lite"/>
    </source>
</evidence>
<evidence type="ECO:0000305" key="3"/>
<comment type="function">
    <text evidence="1">Removes the pyruvyl group from chorismate, with concomitant aromatization of the ring, to provide 4-hydroxybenzoate (4HB) for the ubiquinone pathway.</text>
</comment>
<comment type="catalytic activity">
    <reaction evidence="1">
        <text>chorismate = 4-hydroxybenzoate + pyruvate</text>
        <dbReference type="Rhea" id="RHEA:16505"/>
        <dbReference type="ChEBI" id="CHEBI:15361"/>
        <dbReference type="ChEBI" id="CHEBI:17879"/>
        <dbReference type="ChEBI" id="CHEBI:29748"/>
        <dbReference type="EC" id="4.1.3.40"/>
    </reaction>
</comment>
<comment type="pathway">
    <text evidence="1">Cofactor biosynthesis; ubiquinone biosynthesis.</text>
</comment>
<comment type="subcellular location">
    <subcellularLocation>
        <location evidence="1">Cytoplasm</location>
    </subcellularLocation>
</comment>
<comment type="similarity">
    <text evidence="1">Belongs to the UbiC family.</text>
</comment>
<comment type="sequence caution" evidence="3">
    <conflict type="erroneous initiation">
        <sequence resource="EMBL-CDS" id="ABC39316"/>
    </conflict>
    <text>Extended N-terminus.</text>
</comment>
<dbReference type="EC" id="4.1.3.40" evidence="1"/>
<dbReference type="EMBL" id="CP000086">
    <property type="protein sequence ID" value="ABC39316.1"/>
    <property type="status" value="ALT_INIT"/>
    <property type="molecule type" value="Genomic_DNA"/>
</dbReference>
<dbReference type="SMR" id="Q2SZY9"/>
<dbReference type="KEGG" id="bte:BTH_I0956"/>
<dbReference type="HOGENOM" id="CLU_096824_0_0_4"/>
<dbReference type="UniPathway" id="UPA00232"/>
<dbReference type="Proteomes" id="UP000001930">
    <property type="component" value="Chromosome I"/>
</dbReference>
<dbReference type="GO" id="GO:0005829">
    <property type="term" value="C:cytosol"/>
    <property type="evidence" value="ECO:0007669"/>
    <property type="project" value="TreeGrafter"/>
</dbReference>
<dbReference type="GO" id="GO:0008813">
    <property type="term" value="F:chorismate lyase activity"/>
    <property type="evidence" value="ECO:0007669"/>
    <property type="project" value="UniProtKB-UniRule"/>
</dbReference>
<dbReference type="GO" id="GO:0042866">
    <property type="term" value="P:pyruvate biosynthetic process"/>
    <property type="evidence" value="ECO:0007669"/>
    <property type="project" value="UniProtKB-UniRule"/>
</dbReference>
<dbReference type="GO" id="GO:0006744">
    <property type="term" value="P:ubiquinone biosynthetic process"/>
    <property type="evidence" value="ECO:0007669"/>
    <property type="project" value="UniProtKB-UniRule"/>
</dbReference>
<dbReference type="Gene3D" id="3.40.1410.10">
    <property type="entry name" value="Chorismate lyase-like"/>
    <property type="match status" value="1"/>
</dbReference>
<dbReference type="HAMAP" id="MF_01632">
    <property type="entry name" value="UbiC"/>
    <property type="match status" value="1"/>
</dbReference>
<dbReference type="InterPro" id="IPR007440">
    <property type="entry name" value="Chorismate--pyruvate_lyase"/>
</dbReference>
<dbReference type="InterPro" id="IPR028978">
    <property type="entry name" value="Chorismate_lyase_/UTRA_dom_sf"/>
</dbReference>
<dbReference type="PANTHER" id="PTHR38683">
    <property type="entry name" value="CHORISMATE PYRUVATE-LYASE"/>
    <property type="match status" value="1"/>
</dbReference>
<dbReference type="PANTHER" id="PTHR38683:SF1">
    <property type="entry name" value="CHORISMATE PYRUVATE-LYASE"/>
    <property type="match status" value="1"/>
</dbReference>
<dbReference type="Pfam" id="PF04345">
    <property type="entry name" value="Chor_lyase"/>
    <property type="match status" value="1"/>
</dbReference>
<dbReference type="SUPFAM" id="SSF64288">
    <property type="entry name" value="Chorismate lyase-like"/>
    <property type="match status" value="1"/>
</dbReference>
<sequence>MRFDAADAHWRETPRPGASGAQKDWLTRGGSLTAHLARLGRVTVRVTREAVATPWADERGALACAPRAPVWVREVVLAVDGTPFVAAHSIAPLAASKGVWQAMRRLRTRPLAELLYSDPEVTRSALVSRRVIAGHPLFALASHALSPGHATPHAFAARRSVFERRGTPLMVTECMLPALWRHLDAHGERRARDFEGA</sequence>
<name>UBIC_BURTA</name>
<reference key="1">
    <citation type="journal article" date="2005" name="BMC Genomics">
        <title>Bacterial genome adaptation to niches: divergence of the potential virulence genes in three Burkholderia species of different survival strategies.</title>
        <authorList>
            <person name="Kim H.S."/>
            <person name="Schell M.A."/>
            <person name="Yu Y."/>
            <person name="Ulrich R.L."/>
            <person name="Sarria S.H."/>
            <person name="Nierman W.C."/>
            <person name="DeShazer D."/>
        </authorList>
    </citation>
    <scope>NUCLEOTIDE SEQUENCE [LARGE SCALE GENOMIC DNA]</scope>
    <source>
        <strain>ATCC 700388 / DSM 13276 / CCUG 48851 / CIP 106301 / E264</strain>
    </source>
</reference>
<proteinExistence type="inferred from homology"/>
<keyword id="KW-0963">Cytoplasm</keyword>
<keyword id="KW-0456">Lyase</keyword>
<keyword id="KW-0670">Pyruvate</keyword>
<keyword id="KW-0831">Ubiquinone biosynthesis</keyword>